<reference key="1">
    <citation type="journal article" date="2008" name="J. Bacteriol.">
        <title>Insights into the environmental resistance gene pool from the genome sequence of the multidrug-resistant environmental isolate Escherichia coli SMS-3-5.</title>
        <authorList>
            <person name="Fricke W.F."/>
            <person name="Wright M.S."/>
            <person name="Lindell A.H."/>
            <person name="Harkins D.M."/>
            <person name="Baker-Austin C."/>
            <person name="Ravel J."/>
            <person name="Stepanauskas R."/>
        </authorList>
    </citation>
    <scope>NUCLEOTIDE SEQUENCE [LARGE SCALE GENOMIC DNA]</scope>
    <source>
        <strain>SMS-3-5 / SECEC</strain>
    </source>
</reference>
<protein>
    <recommendedName>
        <fullName evidence="1">Lysophospholipid transporter LplT</fullName>
    </recommendedName>
</protein>
<keyword id="KW-0997">Cell inner membrane</keyword>
<keyword id="KW-1003">Cell membrane</keyword>
<keyword id="KW-0445">Lipid transport</keyword>
<keyword id="KW-0472">Membrane</keyword>
<keyword id="KW-0812">Transmembrane</keyword>
<keyword id="KW-1133">Transmembrane helix</keyword>
<keyword id="KW-0813">Transport</keyword>
<organism>
    <name type="scientific">Escherichia coli (strain SMS-3-5 / SECEC)</name>
    <dbReference type="NCBI Taxonomy" id="439855"/>
    <lineage>
        <taxon>Bacteria</taxon>
        <taxon>Pseudomonadati</taxon>
        <taxon>Pseudomonadota</taxon>
        <taxon>Gammaproteobacteria</taxon>
        <taxon>Enterobacterales</taxon>
        <taxon>Enterobacteriaceae</taxon>
        <taxon>Escherichia</taxon>
    </lineage>
</organism>
<name>LPLT_ECOSM</name>
<feature type="chain" id="PRO_1000201265" description="Lysophospholipid transporter LplT">
    <location>
        <begin position="1"/>
        <end position="397"/>
    </location>
</feature>
<feature type="topological domain" description="Periplasmic" evidence="1">
    <location>
        <begin position="1"/>
        <end position="17"/>
    </location>
</feature>
<feature type="transmembrane region" description="Helical" evidence="1">
    <location>
        <begin position="18"/>
        <end position="38"/>
    </location>
</feature>
<feature type="topological domain" description="Cytoplasmic" evidence="1">
    <location>
        <begin position="39"/>
        <end position="52"/>
    </location>
</feature>
<feature type="transmembrane region" description="Helical" evidence="1">
    <location>
        <begin position="53"/>
        <end position="73"/>
    </location>
</feature>
<feature type="topological domain" description="Periplasmic" evidence="1">
    <location>
        <begin position="74"/>
        <end position="90"/>
    </location>
</feature>
<feature type="transmembrane region" description="Helical" evidence="1">
    <location>
        <begin position="91"/>
        <end position="111"/>
    </location>
</feature>
<feature type="topological domain" description="Cytoplasmic" evidence="1">
    <location>
        <begin position="112"/>
        <end position="144"/>
    </location>
</feature>
<feature type="transmembrane region" description="Helical" evidence="1">
    <location>
        <begin position="145"/>
        <end position="165"/>
    </location>
</feature>
<feature type="topological domain" description="Periplasmic" evidence="1">
    <location>
        <position position="166"/>
    </location>
</feature>
<feature type="transmembrane region" description="Helical" evidence="1">
    <location>
        <begin position="167"/>
        <end position="187"/>
    </location>
</feature>
<feature type="topological domain" description="Cytoplasmic" evidence="1">
    <location>
        <begin position="188"/>
        <end position="226"/>
    </location>
</feature>
<feature type="transmembrane region" description="Helical" evidence="1">
    <location>
        <begin position="227"/>
        <end position="247"/>
    </location>
</feature>
<feature type="topological domain" description="Periplasmic" evidence="1">
    <location>
        <begin position="248"/>
        <end position="256"/>
    </location>
</feature>
<feature type="transmembrane region" description="Helical" evidence="1">
    <location>
        <begin position="257"/>
        <end position="277"/>
    </location>
</feature>
<feature type="topological domain" description="Cytoplasmic" evidence="1">
    <location>
        <begin position="278"/>
        <end position="280"/>
    </location>
</feature>
<feature type="transmembrane region" description="Helical" evidence="1">
    <location>
        <begin position="281"/>
        <end position="301"/>
    </location>
</feature>
<feature type="topological domain" description="Periplasmic" evidence="1">
    <location>
        <begin position="302"/>
        <end position="304"/>
    </location>
</feature>
<feature type="transmembrane region" description="Helical" evidence="1">
    <location>
        <begin position="305"/>
        <end position="325"/>
    </location>
</feature>
<feature type="topological domain" description="Cytoplasmic" evidence="1">
    <location>
        <begin position="326"/>
        <end position="343"/>
    </location>
</feature>
<feature type="transmembrane region" description="Helical" evidence="1">
    <location>
        <begin position="344"/>
        <end position="364"/>
    </location>
</feature>
<feature type="topological domain" description="Periplasmic" evidence="1">
    <location>
        <begin position="365"/>
        <end position="366"/>
    </location>
</feature>
<feature type="transmembrane region" description="Helical" evidence="1">
    <location>
        <begin position="367"/>
        <end position="387"/>
    </location>
</feature>
<feature type="topological domain" description="Cytoplasmic" evidence="1">
    <location>
        <begin position="388"/>
        <end position="397"/>
    </location>
</feature>
<accession>B1LR33</accession>
<proteinExistence type="inferred from homology"/>
<evidence type="ECO:0000255" key="1">
    <source>
        <dbReference type="HAMAP-Rule" id="MF_01585"/>
    </source>
</evidence>
<sequence length="397" mass="41624">MSESVHTNTSLWSKGMKAVIVAQFLSAFGDNALLFATLALLKAQFYPEWSQPILQMVFVGAYILFAPFVGQVADSFAKGRVMMFANGLKLLGAASICFGINPFLGYTLVGVGAAAYSPAKYGILGELTTGSKLVKANGLMEASTIAAILLGSVAGGVLADWHVLVALAACALAYGGAVVANIYIPKLAAARPGQSWNLINMTRSFLNACTSLWRNGETRFSLVGTSLFWGAGVTLRFLLVLWVPVALGITDNATPTYLNAMVAIGIVVGAGAAAKLVTLETVSRCMPAGILIGVVVLIFSLQHELLPAYALLMLIGVLGGFFVVPLNALLQERGKKSVGAGNAIAVQNLGENSAMLLMLGIYSLAVMVGIPVVPIGIGFGALFALAITALWIWQRRH</sequence>
<dbReference type="EMBL" id="CP000970">
    <property type="protein sequence ID" value="ACB19092.1"/>
    <property type="molecule type" value="Genomic_DNA"/>
</dbReference>
<dbReference type="RefSeq" id="WP_000004610.1">
    <property type="nucleotide sequence ID" value="NC_010498.1"/>
</dbReference>
<dbReference type="SMR" id="B1LR33"/>
<dbReference type="KEGG" id="ecm:EcSMS35_2983"/>
<dbReference type="HOGENOM" id="CLU_047399_0_0_6"/>
<dbReference type="Proteomes" id="UP000007011">
    <property type="component" value="Chromosome"/>
</dbReference>
<dbReference type="GO" id="GO:0005886">
    <property type="term" value="C:plasma membrane"/>
    <property type="evidence" value="ECO:0007669"/>
    <property type="project" value="UniProtKB-SubCell"/>
</dbReference>
<dbReference type="GO" id="GO:0051978">
    <property type="term" value="F:lysophospholipid:sodium symporter activity"/>
    <property type="evidence" value="ECO:0007669"/>
    <property type="project" value="InterPro"/>
</dbReference>
<dbReference type="CDD" id="cd06173">
    <property type="entry name" value="MFS_MefA_like"/>
    <property type="match status" value="1"/>
</dbReference>
<dbReference type="FunFam" id="1.20.1250.20:FF:000091">
    <property type="entry name" value="Lysophospholipid transporter LplT"/>
    <property type="match status" value="1"/>
</dbReference>
<dbReference type="Gene3D" id="1.20.1250.20">
    <property type="entry name" value="MFS general substrate transporter like domains"/>
    <property type="match status" value="1"/>
</dbReference>
<dbReference type="HAMAP" id="MF_01585">
    <property type="entry name" value="MFS_LplT"/>
    <property type="match status" value="1"/>
</dbReference>
<dbReference type="InterPro" id="IPR023727">
    <property type="entry name" value="LysoPLipid__transptr_LplT"/>
</dbReference>
<dbReference type="InterPro" id="IPR011701">
    <property type="entry name" value="MFS"/>
</dbReference>
<dbReference type="InterPro" id="IPR036259">
    <property type="entry name" value="MFS_trans_sf"/>
</dbReference>
<dbReference type="NCBIfam" id="NF008397">
    <property type="entry name" value="PRK11195.1"/>
    <property type="match status" value="1"/>
</dbReference>
<dbReference type="PANTHER" id="PTHR43266">
    <property type="entry name" value="MACROLIDE-EFFLUX PROTEIN"/>
    <property type="match status" value="1"/>
</dbReference>
<dbReference type="PANTHER" id="PTHR43266:SF2">
    <property type="entry name" value="MAJOR FACILITATOR SUPERFAMILY (MFS) PROFILE DOMAIN-CONTAINING PROTEIN"/>
    <property type="match status" value="1"/>
</dbReference>
<dbReference type="Pfam" id="PF07690">
    <property type="entry name" value="MFS_1"/>
    <property type="match status" value="1"/>
</dbReference>
<dbReference type="SUPFAM" id="SSF103473">
    <property type="entry name" value="MFS general substrate transporter"/>
    <property type="match status" value="1"/>
</dbReference>
<gene>
    <name evidence="1" type="primary">lplT</name>
    <name type="ordered locus">EcSMS35_2983</name>
</gene>
<comment type="function">
    <text evidence="1">Catalyzes the facilitated diffusion of 2-acyl-glycero-3-phosphoethanolamine (2-acyl-GPE) into the cell.</text>
</comment>
<comment type="subcellular location">
    <subcellularLocation>
        <location evidence="1">Cell inner membrane</location>
        <topology evidence="1">Multi-pass membrane protein</topology>
    </subcellularLocation>
</comment>
<comment type="similarity">
    <text evidence="1">Belongs to the major facilitator superfamily. LplT (TC 2.A.1.42) family.</text>
</comment>